<name>DNLI_ASFK5</name>
<feature type="chain" id="PRO_0000373091" description="DNA ligase">
    <location>
        <begin position="1"/>
        <end position="419"/>
    </location>
</feature>
<feature type="region of interest" description="NTD" evidence="1">
    <location>
        <begin position="1"/>
        <end position="120"/>
    </location>
</feature>
<feature type="region of interest" description="AD domain" evidence="1">
    <location>
        <begin position="121"/>
        <end position="317"/>
    </location>
</feature>
<feature type="region of interest" description="OB domain" evidence="1">
    <location>
        <begin position="318"/>
        <end position="419"/>
    </location>
</feature>
<feature type="active site" description="N6-AMP-lysine intermediate" evidence="2">
    <location>
        <position position="151"/>
    </location>
</feature>
<accession>P0C992</accession>
<proteinExistence type="inferred from homology"/>
<protein>
    <recommendedName>
        <fullName evidence="1">DNA ligase</fullName>
        <ecNumber evidence="2">6.5.1.1</ecNumber>
    </recommendedName>
    <alternativeName>
        <fullName>Polydeoxyribonucleotide synthase [ATP]</fullName>
    </alternativeName>
</protein>
<organismHost>
    <name type="scientific">Ornithodoros</name>
    <name type="common">relapsing fever ticks</name>
    <dbReference type="NCBI Taxonomy" id="6937"/>
</organismHost>
<organismHost>
    <name type="scientific">Phacochoerus aethiopicus</name>
    <name type="common">Warthog</name>
    <dbReference type="NCBI Taxonomy" id="85517"/>
</organismHost>
<organismHost>
    <name type="scientific">Phacochoerus africanus</name>
    <name type="common">Warthog</name>
    <dbReference type="NCBI Taxonomy" id="41426"/>
</organismHost>
<organismHost>
    <name type="scientific">Potamochoerus larvatus</name>
    <name type="common">Bushpig</name>
    <dbReference type="NCBI Taxonomy" id="273792"/>
</organismHost>
<organismHost>
    <name type="scientific">Sus scrofa</name>
    <name type="common">Pig</name>
    <dbReference type="NCBI Taxonomy" id="9823"/>
</organismHost>
<evidence type="ECO:0000250" key="1">
    <source>
        <dbReference type="UniProtKB" id="P35970"/>
    </source>
</evidence>
<evidence type="ECO:0000255" key="2">
    <source>
        <dbReference type="PROSITE-ProRule" id="PRU10135"/>
    </source>
</evidence>
<evidence type="ECO:0000305" key="3"/>
<organism>
    <name type="scientific">African swine fever virus (isolate Pig/Kenya/KEN-50/1950)</name>
    <name type="common">ASFV</name>
    <dbReference type="NCBI Taxonomy" id="561445"/>
    <lineage>
        <taxon>Viruses</taxon>
        <taxon>Varidnaviria</taxon>
        <taxon>Bamfordvirae</taxon>
        <taxon>Nucleocytoviricota</taxon>
        <taxon>Pokkesviricetes</taxon>
        <taxon>Asfuvirales</taxon>
        <taxon>Asfarviridae</taxon>
        <taxon>Asfivirus</taxon>
        <taxon>African swine fever virus</taxon>
    </lineage>
</organism>
<comment type="function">
    <text evidence="1">Very low-fidelity DNA ligase that seals nicks in double-stranded DNA during DNA repair (By similarity). Together with the viral repair DNA polymerase X, fills the single nucleotide gaps generated by the AP endonuclease (By similarity). It is not essential for viral replication and recombination (By similarity). Displays a very low adenylation activity towards DNA with 3'-dideoxy- or 3'-amino-terminated nicks compared to regular nick DNA (By similarity).</text>
</comment>
<comment type="catalytic activity">
    <reaction evidence="2">
        <text>ATP + (deoxyribonucleotide)n-3'-hydroxyl + 5'-phospho-(deoxyribonucleotide)m = (deoxyribonucleotide)n+m + AMP + diphosphate.</text>
        <dbReference type="EC" id="6.5.1.1"/>
    </reaction>
</comment>
<comment type="subcellular location">
    <subcellularLocation>
        <location evidence="1">Virion</location>
    </subcellularLocation>
    <text evidence="1">Found in association with the viral nucleoid.</text>
</comment>
<comment type="domain">
    <text evidence="1">The N-terminus domain (NTD) plays a critical role in DNA-binding, catalytic complex assembly and catalysis.</text>
</comment>
<comment type="miscellaneous">
    <text>Consistent with its intracellular location, ASFV encodes its own replicative DNA polymerase and three base excision repair enzymes: a class II AP endonuclease, the repair polymerase Pol X, and an ATP-dependent DNA ligase.</text>
</comment>
<comment type="similarity">
    <text evidence="3">Belongs to the ATP-dependent DNA ligase family.</text>
</comment>
<keyword id="KW-0067">ATP-binding</keyword>
<keyword id="KW-0131">Cell cycle</keyword>
<keyword id="KW-0132">Cell division</keyword>
<keyword id="KW-0227">DNA damage</keyword>
<keyword id="KW-0233">DNA recombination</keyword>
<keyword id="KW-0234">DNA repair</keyword>
<keyword id="KW-0235">DNA replication</keyword>
<keyword id="KW-0436">Ligase</keyword>
<keyword id="KW-0547">Nucleotide-binding</keyword>
<keyword id="KW-0946">Virion</keyword>
<gene>
    <name type="ordered locus">Ken-112</name>
</gene>
<dbReference type="EC" id="6.5.1.1" evidence="2"/>
<dbReference type="EMBL" id="AY261360">
    <property type="status" value="NOT_ANNOTATED_CDS"/>
    <property type="molecule type" value="Genomic_DNA"/>
</dbReference>
<dbReference type="SMR" id="P0C992"/>
<dbReference type="Proteomes" id="UP000000861">
    <property type="component" value="Segment"/>
</dbReference>
<dbReference type="GO" id="GO:0044423">
    <property type="term" value="C:virion component"/>
    <property type="evidence" value="ECO:0007669"/>
    <property type="project" value="UniProtKB-KW"/>
</dbReference>
<dbReference type="GO" id="GO:0005524">
    <property type="term" value="F:ATP binding"/>
    <property type="evidence" value="ECO:0007669"/>
    <property type="project" value="UniProtKB-KW"/>
</dbReference>
<dbReference type="GO" id="GO:0003910">
    <property type="term" value="F:DNA ligase (ATP) activity"/>
    <property type="evidence" value="ECO:0007669"/>
    <property type="project" value="UniProtKB-EC"/>
</dbReference>
<dbReference type="GO" id="GO:0051301">
    <property type="term" value="P:cell division"/>
    <property type="evidence" value="ECO:0007669"/>
    <property type="project" value="UniProtKB-KW"/>
</dbReference>
<dbReference type="GO" id="GO:0006310">
    <property type="term" value="P:DNA recombination"/>
    <property type="evidence" value="ECO:0007669"/>
    <property type="project" value="UniProtKB-KW"/>
</dbReference>
<dbReference type="GO" id="GO:0006281">
    <property type="term" value="P:DNA repair"/>
    <property type="evidence" value="ECO:0007669"/>
    <property type="project" value="UniProtKB-KW"/>
</dbReference>
<dbReference type="GO" id="GO:0006260">
    <property type="term" value="P:DNA replication"/>
    <property type="evidence" value="ECO:0007669"/>
    <property type="project" value="UniProtKB-KW"/>
</dbReference>
<dbReference type="Gene3D" id="3.30.470.30">
    <property type="entry name" value="DNA ligase/mRNA capping enzyme"/>
    <property type="match status" value="1"/>
</dbReference>
<dbReference type="InterPro" id="IPR012310">
    <property type="entry name" value="DNA_ligase_ATP-dep_cent"/>
</dbReference>
<dbReference type="InterPro" id="IPR016059">
    <property type="entry name" value="DNA_ligase_ATP-dep_CS"/>
</dbReference>
<dbReference type="InterPro" id="IPR012340">
    <property type="entry name" value="NA-bd_OB-fold"/>
</dbReference>
<dbReference type="InterPro" id="IPR050326">
    <property type="entry name" value="NAD_dep_DNA_ligaseB"/>
</dbReference>
<dbReference type="PANTHER" id="PTHR47810">
    <property type="entry name" value="DNA LIGASE"/>
    <property type="match status" value="1"/>
</dbReference>
<dbReference type="PANTHER" id="PTHR47810:SF5">
    <property type="entry name" value="LIGASE, PUTATIVE-RELATED"/>
    <property type="match status" value="1"/>
</dbReference>
<dbReference type="Pfam" id="PF01068">
    <property type="entry name" value="DNA_ligase_A_M"/>
    <property type="match status" value="1"/>
</dbReference>
<dbReference type="SUPFAM" id="SSF56091">
    <property type="entry name" value="DNA ligase/mRNA capping enzyme, catalytic domain"/>
    <property type="match status" value="1"/>
</dbReference>
<dbReference type="SUPFAM" id="SSF50249">
    <property type="entry name" value="Nucleic acid-binding proteins"/>
    <property type="match status" value="1"/>
</dbReference>
<dbReference type="PROSITE" id="PS00697">
    <property type="entry name" value="DNA_LIGASE_A1"/>
    <property type="match status" value="1"/>
</dbReference>
<dbReference type="PROSITE" id="PS00333">
    <property type="entry name" value="DNA_LIGASE_A2"/>
    <property type="match status" value="1"/>
</dbReference>
<dbReference type="PROSITE" id="PS50160">
    <property type="entry name" value="DNA_LIGASE_A3"/>
    <property type="match status" value="1"/>
</dbReference>
<reference key="1">
    <citation type="submission" date="2003-03" db="EMBL/GenBank/DDBJ databases">
        <title>African swine fever virus genomes.</title>
        <authorList>
            <person name="Kutish G.F."/>
            <person name="Rock D.L."/>
        </authorList>
    </citation>
    <scope>NUCLEOTIDE SEQUENCE [LARGE SCALE GENOMIC DNA]</scope>
</reference>
<sequence length="419" mass="48147">MLNQFPGQLSNNVFCFPPIESETKSGKKASWIICVQVMHHNTILPITDEMFSTDVKDAVAEIFTKFFVEEGAVRISKTTRVTEGKNLGKKNATTVVHQAFKDALSKYNRHARQKRGAHTNRGMIPPMLVKHFNIIPKTFFEDETDPIVQRKRNGVRAVACQQGDGSILLYSRTEKEFLGLDNIKKELKQLYLFIDVRVYLDGELYLHHKPLQWIAGQANAKVDSSELHFYVFDCFWSDQLQMPSNKRQQLLTNIFKQKEDLIFIHQVENFSIKDEDEALRLKTQFIKEGYEGAIVRNANGPYEPGYNNYHSPHLAKLKPLLDAEFILVDYTQGKKGKDLGAILWVCELPNKKRFVVTPKHLTYADRYALFQKLTPALFKKHLYGKELTVEYAELSPKTGIPLQARAVGFREPINVLEII</sequence>